<dbReference type="EC" id="2.5.1.72" evidence="1"/>
<dbReference type="EMBL" id="CP001389">
    <property type="protein sequence ID" value="ACP24640.1"/>
    <property type="molecule type" value="Genomic_DNA"/>
</dbReference>
<dbReference type="RefSeq" id="WP_012707425.1">
    <property type="nucleotide sequence ID" value="NC_012587.1"/>
</dbReference>
<dbReference type="RefSeq" id="YP_002825393.1">
    <property type="nucleotide sequence ID" value="NC_012587.1"/>
</dbReference>
<dbReference type="SMR" id="C3M8U4"/>
<dbReference type="STRING" id="394.NGR_c08490"/>
<dbReference type="KEGG" id="rhi:NGR_c08490"/>
<dbReference type="PATRIC" id="fig|394.7.peg.3663"/>
<dbReference type="eggNOG" id="COG0379">
    <property type="taxonomic scope" value="Bacteria"/>
</dbReference>
<dbReference type="HOGENOM" id="CLU_047382_0_0_5"/>
<dbReference type="OrthoDB" id="9801204at2"/>
<dbReference type="UniPathway" id="UPA00253">
    <property type="reaction ID" value="UER00327"/>
</dbReference>
<dbReference type="Proteomes" id="UP000001054">
    <property type="component" value="Chromosome"/>
</dbReference>
<dbReference type="GO" id="GO:0005829">
    <property type="term" value="C:cytosol"/>
    <property type="evidence" value="ECO:0007669"/>
    <property type="project" value="TreeGrafter"/>
</dbReference>
<dbReference type="GO" id="GO:0051539">
    <property type="term" value="F:4 iron, 4 sulfur cluster binding"/>
    <property type="evidence" value="ECO:0007669"/>
    <property type="project" value="UniProtKB-KW"/>
</dbReference>
<dbReference type="GO" id="GO:0046872">
    <property type="term" value="F:metal ion binding"/>
    <property type="evidence" value="ECO:0007669"/>
    <property type="project" value="UniProtKB-KW"/>
</dbReference>
<dbReference type="GO" id="GO:0008987">
    <property type="term" value="F:quinolinate synthetase A activity"/>
    <property type="evidence" value="ECO:0007669"/>
    <property type="project" value="UniProtKB-UniRule"/>
</dbReference>
<dbReference type="GO" id="GO:0034628">
    <property type="term" value="P:'de novo' NAD biosynthetic process from L-aspartate"/>
    <property type="evidence" value="ECO:0007669"/>
    <property type="project" value="TreeGrafter"/>
</dbReference>
<dbReference type="Gene3D" id="3.40.50.10800">
    <property type="entry name" value="NadA-like"/>
    <property type="match status" value="3"/>
</dbReference>
<dbReference type="HAMAP" id="MF_00568">
    <property type="entry name" value="NadA_type2"/>
    <property type="match status" value="1"/>
</dbReference>
<dbReference type="InterPro" id="IPR003473">
    <property type="entry name" value="NadA"/>
</dbReference>
<dbReference type="InterPro" id="IPR036094">
    <property type="entry name" value="NadA_sf"/>
</dbReference>
<dbReference type="InterPro" id="IPR023066">
    <property type="entry name" value="Quinolinate_synth_type2"/>
</dbReference>
<dbReference type="NCBIfam" id="TIGR00550">
    <property type="entry name" value="nadA"/>
    <property type="match status" value="1"/>
</dbReference>
<dbReference type="NCBIfam" id="NF006878">
    <property type="entry name" value="PRK09375.1-2"/>
    <property type="match status" value="1"/>
</dbReference>
<dbReference type="NCBIfam" id="NF006879">
    <property type="entry name" value="PRK09375.1-4"/>
    <property type="match status" value="1"/>
</dbReference>
<dbReference type="PANTHER" id="PTHR30573:SF0">
    <property type="entry name" value="QUINOLINATE SYNTHASE, CHLOROPLASTIC"/>
    <property type="match status" value="1"/>
</dbReference>
<dbReference type="PANTHER" id="PTHR30573">
    <property type="entry name" value="QUINOLINATE SYNTHETASE A"/>
    <property type="match status" value="1"/>
</dbReference>
<dbReference type="Pfam" id="PF02445">
    <property type="entry name" value="NadA"/>
    <property type="match status" value="1"/>
</dbReference>
<dbReference type="SUPFAM" id="SSF142754">
    <property type="entry name" value="NadA-like"/>
    <property type="match status" value="1"/>
</dbReference>
<comment type="function">
    <text evidence="1">Catalyzes the condensation of iminoaspartate with dihydroxyacetone phosphate to form quinolinate.</text>
</comment>
<comment type="catalytic activity">
    <reaction evidence="1">
        <text>iminosuccinate + dihydroxyacetone phosphate = quinolinate + phosphate + 2 H2O + H(+)</text>
        <dbReference type="Rhea" id="RHEA:25888"/>
        <dbReference type="ChEBI" id="CHEBI:15377"/>
        <dbReference type="ChEBI" id="CHEBI:15378"/>
        <dbReference type="ChEBI" id="CHEBI:29959"/>
        <dbReference type="ChEBI" id="CHEBI:43474"/>
        <dbReference type="ChEBI" id="CHEBI:57642"/>
        <dbReference type="ChEBI" id="CHEBI:77875"/>
        <dbReference type="EC" id="2.5.1.72"/>
    </reaction>
    <physiologicalReaction direction="left-to-right" evidence="1">
        <dbReference type="Rhea" id="RHEA:25889"/>
    </physiologicalReaction>
</comment>
<comment type="cofactor">
    <cofactor evidence="1">
        <name>[4Fe-4S] cluster</name>
        <dbReference type="ChEBI" id="CHEBI:49883"/>
    </cofactor>
    <text evidence="1">Binds 1 [4Fe-4S] cluster per subunit.</text>
</comment>
<comment type="pathway">
    <text evidence="1">Cofactor biosynthesis; NAD(+) biosynthesis; quinolinate from iminoaspartate: step 1/1.</text>
</comment>
<comment type="subcellular location">
    <subcellularLocation>
        <location evidence="1">Cytoplasm</location>
    </subcellularLocation>
</comment>
<comment type="similarity">
    <text evidence="1">Belongs to the quinolinate synthase family. Type 2 subfamily.</text>
</comment>
<evidence type="ECO:0000255" key="1">
    <source>
        <dbReference type="HAMAP-Rule" id="MF_00568"/>
    </source>
</evidence>
<reference key="1">
    <citation type="journal article" date="2009" name="Appl. Environ. Microbiol.">
        <title>Rhizobium sp. strain NGR234 possesses a remarkable number of secretion systems.</title>
        <authorList>
            <person name="Schmeisser C."/>
            <person name="Liesegang H."/>
            <person name="Krysciak D."/>
            <person name="Bakkou N."/>
            <person name="Le Quere A."/>
            <person name="Wollherr A."/>
            <person name="Heinemeyer I."/>
            <person name="Morgenstern B."/>
            <person name="Pommerening-Roeser A."/>
            <person name="Flores M."/>
            <person name="Palacios R."/>
            <person name="Brenner S."/>
            <person name="Gottschalk G."/>
            <person name="Schmitz R.A."/>
            <person name="Broughton W.J."/>
            <person name="Perret X."/>
            <person name="Strittmatter A.W."/>
            <person name="Streit W.R."/>
        </authorList>
    </citation>
    <scope>NUCLEOTIDE SEQUENCE [LARGE SCALE GENOMIC DNA]</scope>
    <source>
        <strain>NBRC 101917 / NGR234</strain>
    </source>
</reference>
<name>NADA_SINFN</name>
<keyword id="KW-0004">4Fe-4S</keyword>
<keyword id="KW-0963">Cytoplasm</keyword>
<keyword id="KW-0408">Iron</keyword>
<keyword id="KW-0411">Iron-sulfur</keyword>
<keyword id="KW-0479">Metal-binding</keyword>
<keyword id="KW-0662">Pyridine nucleotide biosynthesis</keyword>
<keyword id="KW-1185">Reference proteome</keyword>
<keyword id="KW-0808">Transferase</keyword>
<gene>
    <name evidence="1" type="primary">nadA</name>
    <name type="ordered locus">NGR_c08490</name>
</gene>
<protein>
    <recommendedName>
        <fullName evidence="1">Quinolinate synthase</fullName>
        <ecNumber evidence="1">2.5.1.72</ecNumber>
    </recommendedName>
</protein>
<feature type="chain" id="PRO_1000146817" description="Quinolinate synthase">
    <location>
        <begin position="1"/>
        <end position="359"/>
    </location>
</feature>
<feature type="binding site" evidence="1">
    <location>
        <position position="81"/>
    </location>
    <ligand>
        <name>iminosuccinate</name>
        <dbReference type="ChEBI" id="CHEBI:77875"/>
    </ligand>
</feature>
<feature type="binding site" evidence="1">
    <location>
        <position position="99"/>
    </location>
    <ligand>
        <name>iminosuccinate</name>
        <dbReference type="ChEBI" id="CHEBI:77875"/>
    </ligand>
</feature>
<feature type="binding site" evidence="1">
    <location>
        <position position="144"/>
    </location>
    <ligand>
        <name>[4Fe-4S] cluster</name>
        <dbReference type="ChEBI" id="CHEBI:49883"/>
    </ligand>
</feature>
<feature type="binding site" evidence="1">
    <location>
        <begin position="170"/>
        <end position="172"/>
    </location>
    <ligand>
        <name>iminosuccinate</name>
        <dbReference type="ChEBI" id="CHEBI:77875"/>
    </ligand>
</feature>
<feature type="binding site" evidence="1">
    <location>
        <position position="187"/>
    </location>
    <ligand>
        <name>iminosuccinate</name>
        <dbReference type="ChEBI" id="CHEBI:77875"/>
    </ligand>
</feature>
<feature type="binding site" evidence="1">
    <location>
        <position position="229"/>
    </location>
    <ligand>
        <name>[4Fe-4S] cluster</name>
        <dbReference type="ChEBI" id="CHEBI:49883"/>
    </ligand>
</feature>
<feature type="binding site" evidence="1">
    <location>
        <begin position="255"/>
        <end position="257"/>
    </location>
    <ligand>
        <name>iminosuccinate</name>
        <dbReference type="ChEBI" id="CHEBI:77875"/>
    </ligand>
</feature>
<feature type="binding site" evidence="1">
    <location>
        <position position="272"/>
    </location>
    <ligand>
        <name>iminosuccinate</name>
        <dbReference type="ChEBI" id="CHEBI:77875"/>
    </ligand>
</feature>
<feature type="binding site" evidence="1">
    <location>
        <position position="315"/>
    </location>
    <ligand>
        <name>[4Fe-4S] cluster</name>
        <dbReference type="ChEBI" id="CHEBI:49883"/>
    </ligand>
</feature>
<accession>C3M8U4</accession>
<sequence length="359" mass="39529">MTRLDLRAGAAPAPAFVSAAARYGVIERPDLAFTPAIARETAHLYEKVKDFIPAFEWAAYAPYVHAINRLKKERNAVILAHNYQTPDIFHCVADIVGDSLQLARDATKVDAEIIVQCGVHFMAETSKLLNPEKTVLIPDAKAGCSLSESITGADVRLLKERYPGVPVVTYVNTSADVKAETDICCTSSNVLAVVESLESDTVLCIPDEYLAMNVARQTNKKILTWKGHCEVHERFTAAELLAYKEANPGIEIIGHPECHPDVIEVCDFSGSTSGMINYVKDKRPQRVLLVTECSMASNIQAEVQGVDFVKPCNLCPHMKRITLPKILDSLLNMTEEVLVDPAIADRARLAVERMVNLKQ</sequence>
<organism>
    <name type="scientific">Sinorhizobium fredii (strain NBRC 101917 / NGR234)</name>
    <dbReference type="NCBI Taxonomy" id="394"/>
    <lineage>
        <taxon>Bacteria</taxon>
        <taxon>Pseudomonadati</taxon>
        <taxon>Pseudomonadota</taxon>
        <taxon>Alphaproteobacteria</taxon>
        <taxon>Hyphomicrobiales</taxon>
        <taxon>Rhizobiaceae</taxon>
        <taxon>Sinorhizobium/Ensifer group</taxon>
        <taxon>Sinorhizobium</taxon>
    </lineage>
</organism>
<proteinExistence type="inferred from homology"/>